<gene>
    <name type="ordered locus">YLR217W</name>
    <name type="ORF">L8167.25</name>
</gene>
<protein>
    <recommendedName>
        <fullName>Putative uncharacterized protein YLR217W</fullName>
    </recommendedName>
</protein>
<evidence type="ECO:0000305" key="1"/>
<evidence type="ECO:0000305" key="2">
    <source>
    </source>
</evidence>
<reference key="1">
    <citation type="journal article" date="1997" name="Nature">
        <title>The nucleotide sequence of Saccharomyces cerevisiae chromosome XII.</title>
        <authorList>
            <person name="Johnston M."/>
            <person name="Hillier L.W."/>
            <person name="Riles L."/>
            <person name="Albermann K."/>
            <person name="Andre B."/>
            <person name="Ansorge W."/>
            <person name="Benes V."/>
            <person name="Brueckner M."/>
            <person name="Delius H."/>
            <person name="Dubois E."/>
            <person name="Duesterhoeft A."/>
            <person name="Entian K.-D."/>
            <person name="Floeth M."/>
            <person name="Goffeau A."/>
            <person name="Hebling U."/>
            <person name="Heumann K."/>
            <person name="Heuss-Neitzel D."/>
            <person name="Hilbert H."/>
            <person name="Hilger F."/>
            <person name="Kleine K."/>
            <person name="Koetter P."/>
            <person name="Louis E.J."/>
            <person name="Messenguy F."/>
            <person name="Mewes H.-W."/>
            <person name="Miosga T."/>
            <person name="Moestl D."/>
            <person name="Mueller-Auer S."/>
            <person name="Nentwich U."/>
            <person name="Obermaier B."/>
            <person name="Piravandi E."/>
            <person name="Pohl T.M."/>
            <person name="Portetelle D."/>
            <person name="Purnelle B."/>
            <person name="Rechmann S."/>
            <person name="Rieger M."/>
            <person name="Rinke M."/>
            <person name="Rose M."/>
            <person name="Scharfe M."/>
            <person name="Scherens B."/>
            <person name="Scholler P."/>
            <person name="Schwager C."/>
            <person name="Schwarz S."/>
            <person name="Underwood A.P."/>
            <person name="Urrestarazu L.A."/>
            <person name="Vandenbol M."/>
            <person name="Verhasselt P."/>
            <person name="Vierendeels F."/>
            <person name="Voet M."/>
            <person name="Volckaert G."/>
            <person name="Voss H."/>
            <person name="Wambutt R."/>
            <person name="Wedler E."/>
            <person name="Wedler H."/>
            <person name="Zimmermann F.K."/>
            <person name="Zollner A."/>
            <person name="Hani J."/>
            <person name="Hoheisel J.D."/>
        </authorList>
    </citation>
    <scope>NUCLEOTIDE SEQUENCE [LARGE SCALE GENOMIC DNA]</scope>
    <source>
        <strain>ATCC 204508 / S288c</strain>
    </source>
</reference>
<reference key="2">
    <citation type="journal article" date="2014" name="G3 (Bethesda)">
        <title>The reference genome sequence of Saccharomyces cerevisiae: Then and now.</title>
        <authorList>
            <person name="Engel S.R."/>
            <person name="Dietrich F.S."/>
            <person name="Fisk D.G."/>
            <person name="Binkley G."/>
            <person name="Balakrishnan R."/>
            <person name="Costanzo M.C."/>
            <person name="Dwight S.S."/>
            <person name="Hitz B.C."/>
            <person name="Karra K."/>
            <person name="Nash R.S."/>
            <person name="Weng S."/>
            <person name="Wong E.D."/>
            <person name="Lloyd P."/>
            <person name="Skrzypek M.S."/>
            <person name="Miyasato S.R."/>
            <person name="Simison M."/>
            <person name="Cherry J.M."/>
        </authorList>
    </citation>
    <scope>GENOME REANNOTATION</scope>
    <source>
        <strain>ATCC 204508 / S288c</strain>
    </source>
</reference>
<dbReference type="EMBL" id="U14913">
    <property type="protein sequence ID" value="AAB67451.1"/>
    <property type="molecule type" value="Genomic_DNA"/>
</dbReference>
<dbReference type="PIR" id="S69295">
    <property type="entry name" value="S69295"/>
</dbReference>
<dbReference type="DIP" id="DIP-5710N"/>
<dbReference type="IntAct" id="O13532">
    <property type="interactions" value="1"/>
</dbReference>
<dbReference type="PaxDb" id="4932-YLR217W"/>
<dbReference type="EnsemblFungi" id="YLR217W_mRNA">
    <property type="protein sequence ID" value="YLR217W"/>
    <property type="gene ID" value="YLR217W"/>
</dbReference>
<dbReference type="AGR" id="SGD:S000004207"/>
<dbReference type="SGD" id="S000004207">
    <property type="gene designation" value="YLR217W"/>
</dbReference>
<dbReference type="HOGENOM" id="CLU_2212033_0_0_1"/>
<accession>O13532</accession>
<sequence length="107" mass="12637">MFNSEIFILEFFIVYALTASTIKIGKITKLTHEVFDHSVENGTLVRQWYIRFSLCHTSISFTQLQKIFSRFRHYVIVQLKNYTALGFTSNRNIKKSFRSSHFYSLIA</sequence>
<name>YL217_YEAST</name>
<feature type="chain" id="PRO_0000299623" description="Putative uncharacterized protein YLR217W">
    <location>
        <begin position="1"/>
        <end position="107"/>
    </location>
</feature>
<proteinExistence type="uncertain"/>
<comment type="miscellaneous">
    <text evidence="1">Almost completely overlaps CPR6.</text>
</comment>
<comment type="caution">
    <text evidence="2">Product of a dubious gene prediction unlikely to encode a functional protein. Because of that it is not part of the S.cerevisiae S288c complete/reference proteome set.</text>
</comment>
<organism>
    <name type="scientific">Saccharomyces cerevisiae (strain ATCC 204508 / S288c)</name>
    <name type="common">Baker's yeast</name>
    <dbReference type="NCBI Taxonomy" id="559292"/>
    <lineage>
        <taxon>Eukaryota</taxon>
        <taxon>Fungi</taxon>
        <taxon>Dikarya</taxon>
        <taxon>Ascomycota</taxon>
        <taxon>Saccharomycotina</taxon>
        <taxon>Saccharomycetes</taxon>
        <taxon>Saccharomycetales</taxon>
        <taxon>Saccharomycetaceae</taxon>
        <taxon>Saccharomyces</taxon>
    </lineage>
</organism>